<dbReference type="EC" id="7.1.1.-" evidence="1"/>
<dbReference type="EMBL" id="BX640433">
    <property type="protein sequence ID" value="CAE38666.1"/>
    <property type="molecule type" value="Genomic_DNA"/>
</dbReference>
<dbReference type="RefSeq" id="WP_003813920.1">
    <property type="nucleotide sequence ID" value="NC_002928.3"/>
</dbReference>
<dbReference type="SMR" id="Q7W5B7"/>
<dbReference type="GeneID" id="93205164"/>
<dbReference type="KEGG" id="bpa:BPP3381"/>
<dbReference type="HOGENOM" id="CLU_144724_2_0_4"/>
<dbReference type="Proteomes" id="UP000001421">
    <property type="component" value="Chromosome"/>
</dbReference>
<dbReference type="GO" id="GO:0030964">
    <property type="term" value="C:NADH dehydrogenase complex"/>
    <property type="evidence" value="ECO:0007669"/>
    <property type="project" value="TreeGrafter"/>
</dbReference>
<dbReference type="GO" id="GO:0005886">
    <property type="term" value="C:plasma membrane"/>
    <property type="evidence" value="ECO:0007669"/>
    <property type="project" value="UniProtKB-SubCell"/>
</dbReference>
<dbReference type="GO" id="GO:0050136">
    <property type="term" value="F:NADH:ubiquinone reductase (non-electrogenic) activity"/>
    <property type="evidence" value="ECO:0007669"/>
    <property type="project" value="UniProtKB-UniRule"/>
</dbReference>
<dbReference type="GO" id="GO:0048038">
    <property type="term" value="F:quinone binding"/>
    <property type="evidence" value="ECO:0007669"/>
    <property type="project" value="UniProtKB-KW"/>
</dbReference>
<dbReference type="GO" id="GO:0042773">
    <property type="term" value="P:ATP synthesis coupled electron transport"/>
    <property type="evidence" value="ECO:0007669"/>
    <property type="project" value="InterPro"/>
</dbReference>
<dbReference type="FunFam" id="1.10.287.3510:FF:000001">
    <property type="entry name" value="NADH-quinone oxidoreductase subunit K"/>
    <property type="match status" value="1"/>
</dbReference>
<dbReference type="Gene3D" id="1.10.287.3510">
    <property type="match status" value="1"/>
</dbReference>
<dbReference type="HAMAP" id="MF_01456">
    <property type="entry name" value="NDH1_NuoK"/>
    <property type="match status" value="1"/>
</dbReference>
<dbReference type="InterPro" id="IPR001133">
    <property type="entry name" value="NADH_UbQ_OxRdtase_chain4L/K"/>
</dbReference>
<dbReference type="InterPro" id="IPR039428">
    <property type="entry name" value="NUOK/Mnh_C1-like"/>
</dbReference>
<dbReference type="NCBIfam" id="NF004320">
    <property type="entry name" value="PRK05715.1-2"/>
    <property type="match status" value="1"/>
</dbReference>
<dbReference type="NCBIfam" id="NF004321">
    <property type="entry name" value="PRK05715.1-3"/>
    <property type="match status" value="1"/>
</dbReference>
<dbReference type="NCBIfam" id="NF004323">
    <property type="entry name" value="PRK05715.1-5"/>
    <property type="match status" value="1"/>
</dbReference>
<dbReference type="PANTHER" id="PTHR11434:SF21">
    <property type="entry name" value="NADH DEHYDROGENASE SUBUNIT 4L-RELATED"/>
    <property type="match status" value="1"/>
</dbReference>
<dbReference type="PANTHER" id="PTHR11434">
    <property type="entry name" value="NADH-UBIQUINONE OXIDOREDUCTASE SUBUNIT ND4L"/>
    <property type="match status" value="1"/>
</dbReference>
<dbReference type="Pfam" id="PF00420">
    <property type="entry name" value="Oxidored_q2"/>
    <property type="match status" value="1"/>
</dbReference>
<name>NUOK_BORPA</name>
<protein>
    <recommendedName>
        <fullName evidence="1">NADH-quinone oxidoreductase subunit K</fullName>
        <ecNumber evidence="1">7.1.1.-</ecNumber>
    </recommendedName>
    <alternativeName>
        <fullName evidence="1">NADH dehydrogenase I subunit K</fullName>
    </alternativeName>
    <alternativeName>
        <fullName evidence="1">NDH-1 subunit K</fullName>
    </alternativeName>
</protein>
<organism>
    <name type="scientific">Bordetella parapertussis (strain 12822 / ATCC BAA-587 / NCTC 13253)</name>
    <dbReference type="NCBI Taxonomy" id="257311"/>
    <lineage>
        <taxon>Bacteria</taxon>
        <taxon>Pseudomonadati</taxon>
        <taxon>Pseudomonadota</taxon>
        <taxon>Betaproteobacteria</taxon>
        <taxon>Burkholderiales</taxon>
        <taxon>Alcaligenaceae</taxon>
        <taxon>Bordetella</taxon>
    </lineage>
</organism>
<keyword id="KW-0997">Cell inner membrane</keyword>
<keyword id="KW-1003">Cell membrane</keyword>
<keyword id="KW-0472">Membrane</keyword>
<keyword id="KW-0520">NAD</keyword>
<keyword id="KW-0874">Quinone</keyword>
<keyword id="KW-1278">Translocase</keyword>
<keyword id="KW-0812">Transmembrane</keyword>
<keyword id="KW-1133">Transmembrane helix</keyword>
<keyword id="KW-0813">Transport</keyword>
<keyword id="KW-0830">Ubiquinone</keyword>
<evidence type="ECO:0000255" key="1">
    <source>
        <dbReference type="HAMAP-Rule" id="MF_01456"/>
    </source>
</evidence>
<feature type="chain" id="PRO_0000389964" description="NADH-quinone oxidoreductase subunit K">
    <location>
        <begin position="1"/>
        <end position="102"/>
    </location>
</feature>
<feature type="transmembrane region" description="Helical" evidence="1">
    <location>
        <begin position="5"/>
        <end position="25"/>
    </location>
</feature>
<feature type="transmembrane region" description="Helical" evidence="1">
    <location>
        <begin position="31"/>
        <end position="51"/>
    </location>
</feature>
<feature type="transmembrane region" description="Helical" evidence="1">
    <location>
        <begin position="62"/>
        <end position="82"/>
    </location>
</feature>
<sequence length="102" mass="11228">MTLTLAHYLILGAILFAIGIFGIFLNRRNLIILLMSIELVLLAVNMNFVAFSSWFGDIAGQVFVFFILTVAAAEAAIGLAILVLLFRNLNTINVDELDRLKG</sequence>
<reference key="1">
    <citation type="journal article" date="2003" name="Nat. Genet.">
        <title>Comparative analysis of the genome sequences of Bordetella pertussis, Bordetella parapertussis and Bordetella bronchiseptica.</title>
        <authorList>
            <person name="Parkhill J."/>
            <person name="Sebaihia M."/>
            <person name="Preston A."/>
            <person name="Murphy L.D."/>
            <person name="Thomson N.R."/>
            <person name="Harris D.E."/>
            <person name="Holden M.T.G."/>
            <person name="Churcher C.M."/>
            <person name="Bentley S.D."/>
            <person name="Mungall K.L."/>
            <person name="Cerdeno-Tarraga A.-M."/>
            <person name="Temple L."/>
            <person name="James K.D."/>
            <person name="Harris B."/>
            <person name="Quail M.A."/>
            <person name="Achtman M."/>
            <person name="Atkin R."/>
            <person name="Baker S."/>
            <person name="Basham D."/>
            <person name="Bason N."/>
            <person name="Cherevach I."/>
            <person name="Chillingworth T."/>
            <person name="Collins M."/>
            <person name="Cronin A."/>
            <person name="Davis P."/>
            <person name="Doggett J."/>
            <person name="Feltwell T."/>
            <person name="Goble A."/>
            <person name="Hamlin N."/>
            <person name="Hauser H."/>
            <person name="Holroyd S."/>
            <person name="Jagels K."/>
            <person name="Leather S."/>
            <person name="Moule S."/>
            <person name="Norberczak H."/>
            <person name="O'Neil S."/>
            <person name="Ormond D."/>
            <person name="Price C."/>
            <person name="Rabbinowitsch E."/>
            <person name="Rutter S."/>
            <person name="Sanders M."/>
            <person name="Saunders D."/>
            <person name="Seeger K."/>
            <person name="Sharp S."/>
            <person name="Simmonds M."/>
            <person name="Skelton J."/>
            <person name="Squares R."/>
            <person name="Squares S."/>
            <person name="Stevens K."/>
            <person name="Unwin L."/>
            <person name="Whitehead S."/>
            <person name="Barrell B.G."/>
            <person name="Maskell D.J."/>
        </authorList>
    </citation>
    <scope>NUCLEOTIDE SEQUENCE [LARGE SCALE GENOMIC DNA]</scope>
    <source>
        <strain>12822 / ATCC BAA-587 / NCTC 13253</strain>
    </source>
</reference>
<proteinExistence type="inferred from homology"/>
<gene>
    <name evidence="1" type="primary">nuoK</name>
    <name type="ordered locus">BPP3381</name>
</gene>
<accession>Q7W5B7</accession>
<comment type="function">
    <text evidence="1">NDH-1 shuttles electrons from NADH, via FMN and iron-sulfur (Fe-S) centers, to quinones in the respiratory chain. The immediate electron acceptor for the enzyme in this species is believed to be ubiquinone. Couples the redox reaction to proton translocation (for every two electrons transferred, four hydrogen ions are translocated across the cytoplasmic membrane), and thus conserves the redox energy in a proton gradient.</text>
</comment>
<comment type="catalytic activity">
    <reaction evidence="1">
        <text>a quinone + NADH + 5 H(+)(in) = a quinol + NAD(+) + 4 H(+)(out)</text>
        <dbReference type="Rhea" id="RHEA:57888"/>
        <dbReference type="ChEBI" id="CHEBI:15378"/>
        <dbReference type="ChEBI" id="CHEBI:24646"/>
        <dbReference type="ChEBI" id="CHEBI:57540"/>
        <dbReference type="ChEBI" id="CHEBI:57945"/>
        <dbReference type="ChEBI" id="CHEBI:132124"/>
    </reaction>
</comment>
<comment type="subunit">
    <text evidence="1">NDH-1 is composed of 14 different subunits. Subunits NuoA, H, J, K, L, M, N constitute the membrane sector of the complex.</text>
</comment>
<comment type="subcellular location">
    <subcellularLocation>
        <location evidence="1">Cell inner membrane</location>
        <topology evidence="1">Multi-pass membrane protein</topology>
    </subcellularLocation>
</comment>
<comment type="similarity">
    <text evidence="1">Belongs to the complex I subunit 4L family.</text>
</comment>